<organism>
    <name type="scientific">Bos taurus</name>
    <name type="common">Bovine</name>
    <dbReference type="NCBI Taxonomy" id="9913"/>
    <lineage>
        <taxon>Eukaryota</taxon>
        <taxon>Metazoa</taxon>
        <taxon>Chordata</taxon>
        <taxon>Craniata</taxon>
        <taxon>Vertebrata</taxon>
        <taxon>Euteleostomi</taxon>
        <taxon>Mammalia</taxon>
        <taxon>Eutheria</taxon>
        <taxon>Laurasiatheria</taxon>
        <taxon>Artiodactyla</taxon>
        <taxon>Ruminantia</taxon>
        <taxon>Pecora</taxon>
        <taxon>Bovidae</taxon>
        <taxon>Bovinae</taxon>
        <taxon>Bos</taxon>
    </lineage>
</organism>
<sequence length="359" mass="39126">MAVVAVLVRKPLEQVSGLLRRRFHRTAPAALQVTVREAINQGMDEELERDEKVFLLGEEVAQYDGAYKVSRGLWKKYGDKRIIDTPISEMGFAGIAVGAAMAGLRPICEFMTFNFSMQAIDQVINSAAKTYYMSGGLQSVPIVFRGPNGASAGVAAQHSQCFAAWYGHCPGLKVVSPWSSEDAKGLIKSAIRDNNPVVVLENELMYGVPFELPSEAQSKDFLIPIGKAKIERQGTHVTIVAHSRPVGHCLEAATVLSKEGIECEVINLRTIRPMDIETIEGSVMKTNHLVTVEGGWPQFGVGAEICARIMEGPAFNFLDAPAVRVTGADVPMPYAKILEDNSVPQVKDIIFAIKKTLNI</sequence>
<gene>
    <name type="primary">PDHB</name>
</gene>
<reference key="1">
    <citation type="journal article" date="2005" name="BMC Genomics">
        <title>Characterization of 954 bovine full-CDS cDNA sequences.</title>
        <authorList>
            <person name="Harhay G.P."/>
            <person name="Sonstegard T.S."/>
            <person name="Keele J.W."/>
            <person name="Heaton M.P."/>
            <person name="Clawson M.L."/>
            <person name="Snelling W.M."/>
            <person name="Wiedmann R.T."/>
            <person name="Van Tassell C.P."/>
            <person name="Smith T.P.L."/>
        </authorList>
    </citation>
    <scope>NUCLEOTIDE SEQUENCE [LARGE SCALE MRNA]</scope>
</reference>
<reference key="2">
    <citation type="submission" date="2007-07" db="EMBL/GenBank/DDBJ databases">
        <authorList>
            <consortium name="NIH - Mammalian Gene Collection (MGC) project"/>
        </authorList>
    </citation>
    <scope>NUCLEOTIDE SEQUENCE [LARGE SCALE MRNA]</scope>
    <source>
        <strain>Hereford</strain>
        <tissue>Heart ventricle</tissue>
    </source>
</reference>
<reference key="3">
    <citation type="journal article" date="1988" name="Biochem. Biophys. Res. Commun.">
        <title>Identification of a cDNA clone for the beta-subunit of the pyruvate dehydrogenase component of human pyruvate dehydrogenase complex.</title>
        <authorList>
            <person name="Ho L."/>
            <person name="Javed A.A."/>
            <person name="Pepin R.A."/>
            <person name="Thekkumkara T.J."/>
            <person name="Raefsky C."/>
            <person name="Mole J.E."/>
            <person name="Caliendo A.M."/>
            <person name="Kwon M.S."/>
            <person name="Kerr D.S."/>
            <person name="Patel M.S."/>
        </authorList>
    </citation>
    <scope>PROTEIN SEQUENCE OF 31-54</scope>
</reference>
<comment type="function">
    <text evidence="1">The pyruvate dehydrogenase complex catalyzes the overall conversion of pyruvate to acetyl-CoA and CO(2), and thereby links the glycolytic pathway to the tricarboxylic cycle.</text>
</comment>
<comment type="catalytic activity">
    <reaction>
        <text>N(6)-[(R)-lipoyl]-L-lysyl-[protein] + pyruvate + H(+) = N(6)-[(R)-S(8)-acetyldihydrolipoyl]-L-lysyl-[protein] + CO2</text>
        <dbReference type="Rhea" id="RHEA:19189"/>
        <dbReference type="Rhea" id="RHEA-COMP:10474"/>
        <dbReference type="Rhea" id="RHEA-COMP:10478"/>
        <dbReference type="ChEBI" id="CHEBI:15361"/>
        <dbReference type="ChEBI" id="CHEBI:15378"/>
        <dbReference type="ChEBI" id="CHEBI:16526"/>
        <dbReference type="ChEBI" id="CHEBI:83099"/>
        <dbReference type="ChEBI" id="CHEBI:83111"/>
        <dbReference type="EC" id="1.2.4.1"/>
    </reaction>
</comment>
<comment type="cofactor">
    <cofactor evidence="2">
        <name>thiamine diphosphate</name>
        <dbReference type="ChEBI" id="CHEBI:58937"/>
    </cofactor>
</comment>
<comment type="subunit">
    <text evidence="2">Heterotetramer of two PDHA1 and two PDHB subunits. The heterotetramer interacts with DLAT, and is part of the multimeric pyruvate dehydrogenase complex that contains multiple copies of pyruvate dehydrogenase (E1), dihydrolipoamide acetyltransferase (DLAT, E2) and lipoamide dehydrogenase (DLD, E3). These subunits are bound to an inner core composed of about 48 DLAT and 12 PDHX molecules. Interacts with DLAT.</text>
</comment>
<comment type="subcellular location">
    <subcellularLocation>
        <location evidence="1">Mitochondrion matrix</location>
    </subcellularLocation>
</comment>
<comment type="sequence caution" evidence="5">
    <conflict type="frameshift">
        <sequence resource="EMBL-CDS" id="AAX46758"/>
    </conflict>
</comment>
<keyword id="KW-0007">Acetylation</keyword>
<keyword id="KW-0119">Carbohydrate metabolism</keyword>
<keyword id="KW-0903">Direct protein sequencing</keyword>
<keyword id="KW-0313">Glucose metabolism</keyword>
<keyword id="KW-0479">Metal-binding</keyword>
<keyword id="KW-0496">Mitochondrion</keyword>
<keyword id="KW-0560">Oxidoreductase</keyword>
<keyword id="KW-0597">Phosphoprotein</keyword>
<keyword id="KW-0630">Potassium</keyword>
<keyword id="KW-0670">Pyruvate</keyword>
<keyword id="KW-1185">Reference proteome</keyword>
<keyword id="KW-0786">Thiamine pyrophosphate</keyword>
<keyword id="KW-0809">Transit peptide</keyword>
<keyword id="KW-0816">Tricarboxylic acid cycle</keyword>
<proteinExistence type="evidence at protein level"/>
<name>ODPB_BOVIN</name>
<accession>P11966</accession>
<accession>A6QQW6</accession>
<accession>Q58CN6</accession>
<evidence type="ECO:0000250" key="1"/>
<evidence type="ECO:0000250" key="2">
    <source>
        <dbReference type="UniProtKB" id="P11177"/>
    </source>
</evidence>
<evidence type="ECO:0000250" key="3">
    <source>
        <dbReference type="UniProtKB" id="Q9D051"/>
    </source>
</evidence>
<evidence type="ECO:0000269" key="4">
    <source>
    </source>
</evidence>
<evidence type="ECO:0000305" key="5"/>
<feature type="transit peptide" description="Mitochondrion" evidence="4">
    <location>
        <begin position="1"/>
        <end position="30"/>
    </location>
</feature>
<feature type="chain" id="PRO_0000162216" description="Pyruvate dehydrogenase E1 component subunit beta, mitochondrial">
    <location>
        <begin position="31"/>
        <end position="359"/>
    </location>
</feature>
<feature type="binding site" evidence="2">
    <location>
        <position position="89"/>
    </location>
    <ligand>
        <name>thiamine diphosphate</name>
        <dbReference type="ChEBI" id="CHEBI:58937"/>
        <note>ligand shared with alpha subunit</note>
    </ligand>
</feature>
<feature type="binding site" evidence="2">
    <location>
        <position position="142"/>
    </location>
    <ligand>
        <name>K(+)</name>
        <dbReference type="ChEBI" id="CHEBI:29103"/>
        <note>structural</note>
    </ligand>
</feature>
<feature type="binding site" evidence="2">
    <location>
        <position position="190"/>
    </location>
    <ligand>
        <name>K(+)</name>
        <dbReference type="ChEBI" id="CHEBI:29103"/>
        <note>structural</note>
    </ligand>
</feature>
<feature type="binding site" evidence="2">
    <location>
        <position position="191"/>
    </location>
    <ligand>
        <name>K(+)</name>
        <dbReference type="ChEBI" id="CHEBI:29103"/>
        <note>structural</note>
    </ligand>
</feature>
<feature type="binding site" evidence="2">
    <location>
        <position position="193"/>
    </location>
    <ligand>
        <name>K(+)</name>
        <dbReference type="ChEBI" id="CHEBI:29103"/>
        <note>structural</note>
    </ligand>
</feature>
<feature type="binding site" evidence="2">
    <location>
        <position position="195"/>
    </location>
    <ligand>
        <name>K(+)</name>
        <dbReference type="ChEBI" id="CHEBI:29103"/>
        <note>structural</note>
    </ligand>
</feature>
<feature type="site" description="Important for interaction with DLAT" evidence="2">
    <location>
        <position position="319"/>
    </location>
</feature>
<feature type="modified residue" description="Phosphotyrosine" evidence="3">
    <location>
        <position position="67"/>
    </location>
</feature>
<feature type="modified residue" description="N6-acetyllysine" evidence="3">
    <location>
        <position position="354"/>
    </location>
</feature>
<protein>
    <recommendedName>
        <fullName>Pyruvate dehydrogenase E1 component subunit beta, mitochondrial</fullName>
        <shortName>PDHE1-B</shortName>
        <ecNumber>1.2.4.1</ecNumber>
    </recommendedName>
</protein>
<dbReference type="EC" id="1.2.4.1"/>
<dbReference type="EMBL" id="BT021911">
    <property type="protein sequence ID" value="AAX46758.1"/>
    <property type="status" value="ALT_FRAME"/>
    <property type="molecule type" value="mRNA"/>
</dbReference>
<dbReference type="EMBL" id="BC150020">
    <property type="protein sequence ID" value="AAI50021.1"/>
    <property type="molecule type" value="mRNA"/>
</dbReference>
<dbReference type="PIR" id="B27712">
    <property type="entry name" value="B27712"/>
</dbReference>
<dbReference type="RefSeq" id="NP_001030512.2">
    <property type="nucleotide sequence ID" value="NM_001035435.3"/>
</dbReference>
<dbReference type="SMR" id="P11966"/>
<dbReference type="CORUM" id="P11966"/>
<dbReference type="FunCoup" id="P11966">
    <property type="interactions" value="2235"/>
</dbReference>
<dbReference type="STRING" id="9913.ENSBTAP00000058224"/>
<dbReference type="PaxDb" id="9913-ENSBTAP00000028958"/>
<dbReference type="PeptideAtlas" id="P11966"/>
<dbReference type="Ensembl" id="ENSBTAT00000028958.6">
    <property type="protein sequence ID" value="ENSBTAP00000028958.4"/>
    <property type="gene ID" value="ENSBTAG00000021724.7"/>
</dbReference>
<dbReference type="GeneID" id="613610"/>
<dbReference type="KEGG" id="bta:613610"/>
<dbReference type="CTD" id="5162"/>
<dbReference type="VEuPathDB" id="HostDB:ENSBTAG00000021724"/>
<dbReference type="VGNC" id="VGNC:49151">
    <property type="gene designation" value="PDHB"/>
</dbReference>
<dbReference type="eggNOG" id="KOG0524">
    <property type="taxonomic scope" value="Eukaryota"/>
</dbReference>
<dbReference type="GeneTree" id="ENSGT00940000155146"/>
<dbReference type="HOGENOM" id="CLU_012907_1_1_1"/>
<dbReference type="InParanoid" id="P11966"/>
<dbReference type="OMA" id="WYANCPG"/>
<dbReference type="OrthoDB" id="10266385at2759"/>
<dbReference type="TreeFam" id="TF105674"/>
<dbReference type="Reactome" id="R-BTA-204174">
    <property type="pathway name" value="Regulation of pyruvate dehydrogenase (PDH) complex"/>
</dbReference>
<dbReference type="Reactome" id="R-BTA-5362517">
    <property type="pathway name" value="Signaling by Retinoic Acid"/>
</dbReference>
<dbReference type="Reactome" id="R-BTA-9837999">
    <property type="pathway name" value="Mitochondrial protein degradation"/>
</dbReference>
<dbReference type="Reactome" id="R-BTA-9861559">
    <property type="pathway name" value="PDH complex synthesizes acetyl-CoA from PYR"/>
</dbReference>
<dbReference type="Proteomes" id="UP000009136">
    <property type="component" value="Chromosome 22"/>
</dbReference>
<dbReference type="Bgee" id="ENSBTAG00000021724">
    <property type="expression patterns" value="Expressed in infraspinatus muscle and 105 other cell types or tissues"/>
</dbReference>
<dbReference type="GO" id="GO:0005759">
    <property type="term" value="C:mitochondrial matrix"/>
    <property type="evidence" value="ECO:0007669"/>
    <property type="project" value="UniProtKB-SubCell"/>
</dbReference>
<dbReference type="GO" id="GO:0005654">
    <property type="term" value="C:nucleoplasm"/>
    <property type="evidence" value="ECO:0007669"/>
    <property type="project" value="Ensembl"/>
</dbReference>
<dbReference type="GO" id="GO:0045254">
    <property type="term" value="C:pyruvate dehydrogenase complex"/>
    <property type="evidence" value="ECO:0000250"/>
    <property type="project" value="UniProtKB"/>
</dbReference>
<dbReference type="GO" id="GO:0046872">
    <property type="term" value="F:metal ion binding"/>
    <property type="evidence" value="ECO:0007669"/>
    <property type="project" value="UniProtKB-KW"/>
</dbReference>
<dbReference type="GO" id="GO:0004739">
    <property type="term" value="F:pyruvate dehydrogenase (acetyl-transferring) activity"/>
    <property type="evidence" value="ECO:0000318"/>
    <property type="project" value="GO_Central"/>
</dbReference>
<dbReference type="GO" id="GO:0034604">
    <property type="term" value="F:pyruvate dehydrogenase (NAD+) activity"/>
    <property type="evidence" value="ECO:0007669"/>
    <property type="project" value="Ensembl"/>
</dbReference>
<dbReference type="GO" id="GO:0006006">
    <property type="term" value="P:glucose metabolic process"/>
    <property type="evidence" value="ECO:0007669"/>
    <property type="project" value="UniProtKB-KW"/>
</dbReference>
<dbReference type="GO" id="GO:0006086">
    <property type="term" value="P:pyruvate decarboxylation to acetyl-CoA"/>
    <property type="evidence" value="ECO:0000250"/>
    <property type="project" value="UniProtKB"/>
</dbReference>
<dbReference type="GO" id="GO:0006099">
    <property type="term" value="P:tricarboxylic acid cycle"/>
    <property type="evidence" value="ECO:0007669"/>
    <property type="project" value="UniProtKB-KW"/>
</dbReference>
<dbReference type="CDD" id="cd07036">
    <property type="entry name" value="TPP_PYR_E1-PDHc-beta_like"/>
    <property type="match status" value="1"/>
</dbReference>
<dbReference type="FunFam" id="3.40.50.920:FF:000001">
    <property type="entry name" value="Pyruvate dehydrogenase E1 beta subunit"/>
    <property type="match status" value="1"/>
</dbReference>
<dbReference type="FunFam" id="3.40.50.970:FF:000006">
    <property type="entry name" value="Pyruvate dehydrogenase E1 component subunit beta"/>
    <property type="match status" value="1"/>
</dbReference>
<dbReference type="Gene3D" id="3.40.50.920">
    <property type="match status" value="1"/>
</dbReference>
<dbReference type="Gene3D" id="3.40.50.970">
    <property type="match status" value="1"/>
</dbReference>
<dbReference type="InterPro" id="IPR027110">
    <property type="entry name" value="PDHB_mito-type"/>
</dbReference>
<dbReference type="InterPro" id="IPR029061">
    <property type="entry name" value="THDP-binding"/>
</dbReference>
<dbReference type="InterPro" id="IPR009014">
    <property type="entry name" value="Transketo_C/PFOR_II"/>
</dbReference>
<dbReference type="InterPro" id="IPR005475">
    <property type="entry name" value="Transketolase-like_Pyr-bd"/>
</dbReference>
<dbReference type="InterPro" id="IPR033248">
    <property type="entry name" value="Transketolase_C"/>
</dbReference>
<dbReference type="NCBIfam" id="NF006667">
    <property type="entry name" value="PRK09212.1"/>
    <property type="match status" value="1"/>
</dbReference>
<dbReference type="NCBIfam" id="NF008854">
    <property type="entry name" value="PRK11892.1"/>
    <property type="match status" value="1"/>
</dbReference>
<dbReference type="PANTHER" id="PTHR11624">
    <property type="entry name" value="DEHYDROGENASE RELATED"/>
    <property type="match status" value="1"/>
</dbReference>
<dbReference type="PANTHER" id="PTHR11624:SF96">
    <property type="entry name" value="PYRUVATE DEHYDROGENASE E1 COMPONENT SUBUNIT BETA, MITOCHONDRIAL"/>
    <property type="match status" value="1"/>
</dbReference>
<dbReference type="Pfam" id="PF02779">
    <property type="entry name" value="Transket_pyr"/>
    <property type="match status" value="1"/>
</dbReference>
<dbReference type="Pfam" id="PF02780">
    <property type="entry name" value="Transketolase_C"/>
    <property type="match status" value="1"/>
</dbReference>
<dbReference type="SMART" id="SM00861">
    <property type="entry name" value="Transket_pyr"/>
    <property type="match status" value="1"/>
</dbReference>
<dbReference type="SUPFAM" id="SSF52518">
    <property type="entry name" value="Thiamin diphosphate-binding fold (THDP-binding)"/>
    <property type="match status" value="1"/>
</dbReference>
<dbReference type="SUPFAM" id="SSF52922">
    <property type="entry name" value="TK C-terminal domain-like"/>
    <property type="match status" value="1"/>
</dbReference>